<proteinExistence type="inferred from homology"/>
<organism>
    <name type="scientific">Nitrobacter hamburgensis (strain DSM 10229 / NCIMB 13809 / X14)</name>
    <dbReference type="NCBI Taxonomy" id="323097"/>
    <lineage>
        <taxon>Bacteria</taxon>
        <taxon>Pseudomonadati</taxon>
        <taxon>Pseudomonadota</taxon>
        <taxon>Alphaproteobacteria</taxon>
        <taxon>Hyphomicrobiales</taxon>
        <taxon>Nitrobacteraceae</taxon>
        <taxon>Nitrobacter</taxon>
    </lineage>
</organism>
<keyword id="KW-0414">Isoprene biosynthesis</keyword>
<keyword id="KW-0460">Magnesium</keyword>
<keyword id="KW-0479">Metal-binding</keyword>
<keyword id="KW-1185">Reference proteome</keyword>
<keyword id="KW-0784">Thiamine biosynthesis</keyword>
<keyword id="KW-0786">Thiamine pyrophosphate</keyword>
<keyword id="KW-0808">Transferase</keyword>
<comment type="function">
    <text evidence="1">Catalyzes the acyloin condensation reaction between C atoms 2 and 3 of pyruvate and glyceraldehyde 3-phosphate to yield 1-deoxy-D-xylulose-5-phosphate (DXP).</text>
</comment>
<comment type="catalytic activity">
    <reaction evidence="1">
        <text>D-glyceraldehyde 3-phosphate + pyruvate + H(+) = 1-deoxy-D-xylulose 5-phosphate + CO2</text>
        <dbReference type="Rhea" id="RHEA:12605"/>
        <dbReference type="ChEBI" id="CHEBI:15361"/>
        <dbReference type="ChEBI" id="CHEBI:15378"/>
        <dbReference type="ChEBI" id="CHEBI:16526"/>
        <dbReference type="ChEBI" id="CHEBI:57792"/>
        <dbReference type="ChEBI" id="CHEBI:59776"/>
        <dbReference type="EC" id="2.2.1.7"/>
    </reaction>
</comment>
<comment type="cofactor">
    <cofactor evidence="1">
        <name>Mg(2+)</name>
        <dbReference type="ChEBI" id="CHEBI:18420"/>
    </cofactor>
    <text evidence="1">Binds 1 Mg(2+) ion per subunit.</text>
</comment>
<comment type="cofactor">
    <cofactor evidence="1">
        <name>thiamine diphosphate</name>
        <dbReference type="ChEBI" id="CHEBI:58937"/>
    </cofactor>
    <text evidence="1">Binds 1 thiamine pyrophosphate per subunit.</text>
</comment>
<comment type="pathway">
    <text evidence="1">Metabolic intermediate biosynthesis; 1-deoxy-D-xylulose 5-phosphate biosynthesis; 1-deoxy-D-xylulose 5-phosphate from D-glyceraldehyde 3-phosphate and pyruvate: step 1/1.</text>
</comment>
<comment type="subunit">
    <text evidence="1">Homodimer.</text>
</comment>
<comment type="similarity">
    <text evidence="1">Belongs to the transketolase family. DXPS subfamily.</text>
</comment>
<protein>
    <recommendedName>
        <fullName evidence="1">1-deoxy-D-xylulose-5-phosphate synthase</fullName>
        <ecNumber evidence="1">2.2.1.7</ecNumber>
    </recommendedName>
    <alternativeName>
        <fullName evidence="1">1-deoxyxylulose-5-phosphate synthase</fullName>
        <shortName evidence="1">DXP synthase</shortName>
        <shortName evidence="1">DXPS</shortName>
    </alternativeName>
</protein>
<name>DXS_NITHX</name>
<dbReference type="EC" id="2.2.1.7" evidence="1"/>
<dbReference type="EMBL" id="CP000319">
    <property type="protein sequence ID" value="ABE61657.1"/>
    <property type="molecule type" value="Genomic_DNA"/>
</dbReference>
<dbReference type="SMR" id="Q1QQ40"/>
<dbReference type="STRING" id="323097.Nham_0778"/>
<dbReference type="KEGG" id="nha:Nham_0778"/>
<dbReference type="eggNOG" id="COG1154">
    <property type="taxonomic scope" value="Bacteria"/>
</dbReference>
<dbReference type="HOGENOM" id="CLU_009227_1_4_5"/>
<dbReference type="UniPathway" id="UPA00064">
    <property type="reaction ID" value="UER00091"/>
</dbReference>
<dbReference type="Proteomes" id="UP000001953">
    <property type="component" value="Chromosome"/>
</dbReference>
<dbReference type="GO" id="GO:0008661">
    <property type="term" value="F:1-deoxy-D-xylulose-5-phosphate synthase activity"/>
    <property type="evidence" value="ECO:0007669"/>
    <property type="project" value="UniProtKB-UniRule"/>
</dbReference>
<dbReference type="GO" id="GO:0000287">
    <property type="term" value="F:magnesium ion binding"/>
    <property type="evidence" value="ECO:0007669"/>
    <property type="project" value="UniProtKB-UniRule"/>
</dbReference>
<dbReference type="GO" id="GO:0030976">
    <property type="term" value="F:thiamine pyrophosphate binding"/>
    <property type="evidence" value="ECO:0007669"/>
    <property type="project" value="UniProtKB-UniRule"/>
</dbReference>
<dbReference type="GO" id="GO:0052865">
    <property type="term" value="P:1-deoxy-D-xylulose 5-phosphate biosynthetic process"/>
    <property type="evidence" value="ECO:0007669"/>
    <property type="project" value="UniProtKB-UniPathway"/>
</dbReference>
<dbReference type="GO" id="GO:0019682">
    <property type="term" value="P:glyceraldehyde-3-phosphate metabolic process"/>
    <property type="evidence" value="ECO:0007669"/>
    <property type="project" value="UniProtKB-ARBA"/>
</dbReference>
<dbReference type="GO" id="GO:0016114">
    <property type="term" value="P:terpenoid biosynthetic process"/>
    <property type="evidence" value="ECO:0007669"/>
    <property type="project" value="UniProtKB-UniRule"/>
</dbReference>
<dbReference type="GO" id="GO:0009228">
    <property type="term" value="P:thiamine biosynthetic process"/>
    <property type="evidence" value="ECO:0007669"/>
    <property type="project" value="UniProtKB-UniRule"/>
</dbReference>
<dbReference type="CDD" id="cd02007">
    <property type="entry name" value="TPP_DXS"/>
    <property type="match status" value="1"/>
</dbReference>
<dbReference type="CDD" id="cd07033">
    <property type="entry name" value="TPP_PYR_DXS_TK_like"/>
    <property type="match status" value="1"/>
</dbReference>
<dbReference type="FunFam" id="3.40.50.920:FF:000002">
    <property type="entry name" value="1-deoxy-D-xylulose-5-phosphate synthase"/>
    <property type="match status" value="1"/>
</dbReference>
<dbReference type="FunFam" id="3.40.50.970:FF:000005">
    <property type="entry name" value="1-deoxy-D-xylulose-5-phosphate synthase"/>
    <property type="match status" value="1"/>
</dbReference>
<dbReference type="Gene3D" id="3.40.50.920">
    <property type="match status" value="1"/>
</dbReference>
<dbReference type="Gene3D" id="3.40.50.970">
    <property type="match status" value="2"/>
</dbReference>
<dbReference type="HAMAP" id="MF_00315">
    <property type="entry name" value="DXP_synth"/>
    <property type="match status" value="1"/>
</dbReference>
<dbReference type="InterPro" id="IPR005477">
    <property type="entry name" value="Dxylulose-5-P_synthase"/>
</dbReference>
<dbReference type="InterPro" id="IPR029061">
    <property type="entry name" value="THDP-binding"/>
</dbReference>
<dbReference type="InterPro" id="IPR009014">
    <property type="entry name" value="Transketo_C/PFOR_II"/>
</dbReference>
<dbReference type="InterPro" id="IPR005475">
    <property type="entry name" value="Transketolase-like_Pyr-bd"/>
</dbReference>
<dbReference type="InterPro" id="IPR020826">
    <property type="entry name" value="Transketolase_BS"/>
</dbReference>
<dbReference type="InterPro" id="IPR033248">
    <property type="entry name" value="Transketolase_C"/>
</dbReference>
<dbReference type="InterPro" id="IPR049557">
    <property type="entry name" value="Transketolase_CS"/>
</dbReference>
<dbReference type="NCBIfam" id="TIGR00204">
    <property type="entry name" value="dxs"/>
    <property type="match status" value="1"/>
</dbReference>
<dbReference type="NCBIfam" id="NF003933">
    <property type="entry name" value="PRK05444.2-2"/>
    <property type="match status" value="1"/>
</dbReference>
<dbReference type="PANTHER" id="PTHR43322">
    <property type="entry name" value="1-D-DEOXYXYLULOSE 5-PHOSPHATE SYNTHASE-RELATED"/>
    <property type="match status" value="1"/>
</dbReference>
<dbReference type="PANTHER" id="PTHR43322:SF5">
    <property type="entry name" value="1-DEOXY-D-XYLULOSE-5-PHOSPHATE SYNTHASE, CHLOROPLASTIC"/>
    <property type="match status" value="1"/>
</dbReference>
<dbReference type="Pfam" id="PF13292">
    <property type="entry name" value="DXP_synthase_N"/>
    <property type="match status" value="1"/>
</dbReference>
<dbReference type="Pfam" id="PF02779">
    <property type="entry name" value="Transket_pyr"/>
    <property type="match status" value="1"/>
</dbReference>
<dbReference type="Pfam" id="PF02780">
    <property type="entry name" value="Transketolase_C"/>
    <property type="match status" value="1"/>
</dbReference>
<dbReference type="SMART" id="SM00861">
    <property type="entry name" value="Transket_pyr"/>
    <property type="match status" value="1"/>
</dbReference>
<dbReference type="SUPFAM" id="SSF52518">
    <property type="entry name" value="Thiamin diphosphate-binding fold (THDP-binding)"/>
    <property type="match status" value="2"/>
</dbReference>
<dbReference type="SUPFAM" id="SSF52922">
    <property type="entry name" value="TK C-terminal domain-like"/>
    <property type="match status" value="1"/>
</dbReference>
<dbReference type="PROSITE" id="PS00801">
    <property type="entry name" value="TRANSKETOLASE_1"/>
    <property type="match status" value="1"/>
</dbReference>
<dbReference type="PROSITE" id="PS00802">
    <property type="entry name" value="TRANSKETOLASE_2"/>
    <property type="match status" value="1"/>
</dbReference>
<feature type="chain" id="PRO_0000256443" description="1-deoxy-D-xylulose-5-phosphate synthase">
    <location>
        <begin position="1"/>
        <end position="668"/>
    </location>
</feature>
<feature type="binding site" evidence="1">
    <location>
        <position position="105"/>
    </location>
    <ligand>
        <name>thiamine diphosphate</name>
        <dbReference type="ChEBI" id="CHEBI:58937"/>
    </ligand>
</feature>
<feature type="binding site" evidence="1">
    <location>
        <begin position="146"/>
        <end position="148"/>
    </location>
    <ligand>
        <name>thiamine diphosphate</name>
        <dbReference type="ChEBI" id="CHEBI:58937"/>
    </ligand>
</feature>
<feature type="binding site" evidence="1">
    <location>
        <position position="177"/>
    </location>
    <ligand>
        <name>Mg(2+)</name>
        <dbReference type="ChEBI" id="CHEBI:18420"/>
    </ligand>
</feature>
<feature type="binding site" evidence="1">
    <location>
        <begin position="178"/>
        <end position="179"/>
    </location>
    <ligand>
        <name>thiamine diphosphate</name>
        <dbReference type="ChEBI" id="CHEBI:58937"/>
    </ligand>
</feature>
<feature type="binding site" evidence="1">
    <location>
        <position position="206"/>
    </location>
    <ligand>
        <name>Mg(2+)</name>
        <dbReference type="ChEBI" id="CHEBI:18420"/>
    </ligand>
</feature>
<feature type="binding site" evidence="1">
    <location>
        <position position="206"/>
    </location>
    <ligand>
        <name>thiamine diphosphate</name>
        <dbReference type="ChEBI" id="CHEBI:58937"/>
    </ligand>
</feature>
<feature type="binding site" evidence="1">
    <location>
        <position position="316"/>
    </location>
    <ligand>
        <name>thiamine diphosphate</name>
        <dbReference type="ChEBI" id="CHEBI:58937"/>
    </ligand>
</feature>
<feature type="binding site" evidence="1">
    <location>
        <position position="398"/>
    </location>
    <ligand>
        <name>thiamine diphosphate</name>
        <dbReference type="ChEBI" id="CHEBI:58937"/>
    </ligand>
</feature>
<sequence length="668" mass="71861">MGVCCATAPASDRRSRHPDMQNWNVAVTDFSKTPLLDTIRTPADLRKLRVEQLRQVADELRKETIDAVSVTGGHFGAGLGVVELTTAIHYIFDTPRDRLIWDVGHQAYPHKILTGRRDRIRTLRTGGGLSGFTKRTESDYDPFGAAHSSTSISASLGMAVARDLSGGKNNVIAVIGDGAMSAGMAYEAMNNAGAMNSRLIVILNDNDMSIAPPVGAMSAYLSRLYSGKTYRSLREAAKQLGKHLPKMIADRAERVEEYSRGFMVNSGTLFEELGFYYVGPIDGHNLDHLLPVLKNVRDMENGPILLHVVTQKGKGYGPAEAAADKYHAVVKFDVSTGAQSKSKPNAPAYQNVFGQSLVKEAEKDDKIIAITAAMPSGTGVDIFNKAFPKRTFDVGIAEQHAVTFAAGLATEGFKPFCAIYSTFLQRGYDQIVHDVAIQSLPVRFAIDRAGLVGADGATHAGSFDNAYLGCLPNFVIMAASDEAELVHMVATQVAINDRPSAVRYPRGEGRGVEMPEVGVPLPIGKGRIVRQGSKVALLSLGTRLAECEKAADELAAHGLSTTIADARFMKPLDVDLVLKLARDHDVLITIEEGSIGGFGSHVMQTLAEHGALDSGQVRVRAMVLPDEFLDHDTPNAMYASVGLDDRGIVAKVFEALGKDVTTETVKLA</sequence>
<gene>
    <name evidence="1" type="primary">dxs</name>
    <name type="ordered locus">Nham_0778</name>
</gene>
<evidence type="ECO:0000255" key="1">
    <source>
        <dbReference type="HAMAP-Rule" id="MF_00315"/>
    </source>
</evidence>
<reference key="1">
    <citation type="submission" date="2006-03" db="EMBL/GenBank/DDBJ databases">
        <title>Complete sequence of chromosome of Nitrobacter hamburgensis X14.</title>
        <authorList>
            <consortium name="US DOE Joint Genome Institute"/>
            <person name="Copeland A."/>
            <person name="Lucas S."/>
            <person name="Lapidus A."/>
            <person name="Barry K."/>
            <person name="Detter J.C."/>
            <person name="Glavina del Rio T."/>
            <person name="Hammon N."/>
            <person name="Israni S."/>
            <person name="Dalin E."/>
            <person name="Tice H."/>
            <person name="Pitluck S."/>
            <person name="Chain P."/>
            <person name="Malfatti S."/>
            <person name="Shin M."/>
            <person name="Vergez L."/>
            <person name="Schmutz J."/>
            <person name="Larimer F."/>
            <person name="Land M."/>
            <person name="Hauser L."/>
            <person name="Kyrpides N."/>
            <person name="Ivanova N."/>
            <person name="Ward B."/>
            <person name="Arp D."/>
            <person name="Klotz M."/>
            <person name="Stein L."/>
            <person name="O'Mullan G."/>
            <person name="Starkenburg S."/>
            <person name="Sayavedra L."/>
            <person name="Poret-Peterson A.T."/>
            <person name="Gentry M.E."/>
            <person name="Bruce D."/>
            <person name="Richardson P."/>
        </authorList>
    </citation>
    <scope>NUCLEOTIDE SEQUENCE [LARGE SCALE GENOMIC DNA]</scope>
    <source>
        <strain>DSM 10229 / NCIMB 13809 / X14</strain>
    </source>
</reference>
<accession>Q1QQ40</accession>